<proteinExistence type="evidence at transcript level"/>
<protein>
    <recommendedName>
        <fullName>Cadherin-23</fullName>
    </recommendedName>
    <alternativeName>
        <fullName>Otocadherin</fullName>
    </alternativeName>
</protein>
<gene>
    <name type="primary">Cdh23</name>
</gene>
<accession>P58365</accession>
<name>CAD23_RAT</name>
<feature type="signal peptide" evidence="4">
    <location>
        <begin position="1"/>
        <end position="23"/>
    </location>
</feature>
<feature type="chain" id="PRO_0000003826" description="Cadherin-23">
    <location>
        <begin position="24"/>
        <end position="3317"/>
    </location>
</feature>
<feature type="topological domain" description="Extracellular" evidence="4">
    <location>
        <begin position="24"/>
        <end position="3062"/>
    </location>
</feature>
<feature type="transmembrane region" description="Helical" evidence="4">
    <location>
        <begin position="3063"/>
        <end position="3083"/>
    </location>
</feature>
<feature type="topological domain" description="Cytoplasmic" evidence="4">
    <location>
        <begin position="3084"/>
        <end position="3317"/>
    </location>
</feature>
<feature type="domain" description="Cadherin 1" evidence="5">
    <location>
        <begin position="34"/>
        <end position="132"/>
    </location>
</feature>
<feature type="domain" description="Cadherin 2" evidence="5">
    <location>
        <begin position="133"/>
        <end position="236"/>
    </location>
</feature>
<feature type="domain" description="Cadherin 3" evidence="5">
    <location>
        <begin position="237"/>
        <end position="348"/>
    </location>
</feature>
<feature type="domain" description="Cadherin 4" evidence="5">
    <location>
        <begin position="349"/>
        <end position="458"/>
    </location>
</feature>
<feature type="domain" description="Cadherin 5" evidence="5">
    <location>
        <begin position="459"/>
        <end position="559"/>
    </location>
</feature>
<feature type="domain" description="Cadherin 6" evidence="5">
    <location>
        <begin position="560"/>
        <end position="669"/>
    </location>
</feature>
<feature type="domain" description="Cadherin 7" evidence="5">
    <location>
        <begin position="670"/>
        <end position="782"/>
    </location>
</feature>
<feature type="domain" description="Cadherin 8" evidence="5">
    <location>
        <begin position="777"/>
        <end position="888"/>
    </location>
</feature>
<feature type="domain" description="Cadherin 9" evidence="5">
    <location>
        <begin position="889"/>
        <end position="993"/>
    </location>
</feature>
<feature type="domain" description="Cadherin 10" evidence="5">
    <location>
        <begin position="994"/>
        <end position="1100"/>
    </location>
</feature>
<feature type="domain" description="Cadherin 11" evidence="5">
    <location>
        <begin position="1101"/>
        <end position="1206"/>
    </location>
</feature>
<feature type="domain" description="Cadherin 12" evidence="5">
    <location>
        <begin position="1208"/>
        <end position="1311"/>
    </location>
</feature>
<feature type="domain" description="Cadherin 13" evidence="5">
    <location>
        <begin position="1312"/>
        <end position="1416"/>
    </location>
</feature>
<feature type="domain" description="Cadherin 14" evidence="5">
    <location>
        <begin position="1418"/>
        <end position="1525"/>
    </location>
</feature>
<feature type="domain" description="Cadherin 15" evidence="5">
    <location>
        <begin position="1527"/>
        <end position="1632"/>
    </location>
</feature>
<feature type="domain" description="Cadherin 16" evidence="5">
    <location>
        <begin position="1633"/>
        <end position="1742"/>
    </location>
</feature>
<feature type="domain" description="Cadherin 17" evidence="5">
    <location>
        <begin position="1743"/>
        <end position="1849"/>
    </location>
</feature>
<feature type="domain" description="Cadherin 18" evidence="5">
    <location>
        <begin position="1850"/>
        <end position="1957"/>
    </location>
</feature>
<feature type="domain" description="Cadherin 19" evidence="5">
    <location>
        <begin position="1958"/>
        <end position="2067"/>
    </location>
</feature>
<feature type="domain" description="Cadherin 20" evidence="5">
    <location>
        <begin position="2068"/>
        <end position="2172"/>
    </location>
</feature>
<feature type="domain" description="Cadherin 21" evidence="5">
    <location>
        <begin position="2173"/>
        <end position="2291"/>
    </location>
</feature>
<feature type="domain" description="Cadherin 22" evidence="5">
    <location>
        <begin position="2295"/>
        <end position="2400"/>
    </location>
</feature>
<feature type="domain" description="Cadherin 23" evidence="5">
    <location>
        <begin position="2401"/>
        <end position="2507"/>
    </location>
</feature>
<feature type="domain" description="Cadherin 24" evidence="5">
    <location>
        <begin position="2508"/>
        <end position="2609"/>
    </location>
</feature>
<feature type="domain" description="Cadherin 25" evidence="5">
    <location>
        <begin position="2612"/>
        <end position="2720"/>
    </location>
</feature>
<feature type="domain" description="Cadherin 26" evidence="5">
    <location>
        <begin position="2727"/>
        <end position="2844"/>
    </location>
</feature>
<feature type="domain" description="Cadherin 27" evidence="5">
    <location>
        <begin position="2845"/>
        <end position="2973"/>
    </location>
</feature>
<feature type="glycosylation site" description="N-linked (GlcNAc...) asparagine" evidence="4">
    <location>
        <position position="155"/>
    </location>
</feature>
<feature type="glycosylation site" description="N-linked (GlcNAc...) asparagine" evidence="4">
    <location>
        <position position="206"/>
    </location>
</feature>
<feature type="glycosylation site" description="N-linked (GlcNAc...) asparagine" evidence="4">
    <location>
        <position position="349"/>
    </location>
</feature>
<feature type="glycosylation site" description="N-linked (GlcNAc...) asparagine" evidence="4">
    <location>
        <position position="391"/>
    </location>
</feature>
<feature type="glycosylation site" description="N-linked (GlcNAc...) asparagine" evidence="4">
    <location>
        <position position="432"/>
    </location>
</feature>
<feature type="glycosylation site" description="N-linked (GlcNAc...) asparagine" evidence="4">
    <location>
        <position position="464"/>
    </location>
</feature>
<feature type="glycosylation site" description="N-linked (GlcNAc...) asparagine" evidence="4">
    <location>
        <position position="470"/>
    </location>
</feature>
<feature type="glycosylation site" description="N-linked (GlcNAc...) asparagine" evidence="4">
    <location>
        <position position="600"/>
    </location>
</feature>
<feature type="glycosylation site" description="N-linked (GlcNAc...) asparagine" evidence="4">
    <location>
        <position position="692"/>
    </location>
</feature>
<feature type="glycosylation site" description="N-linked (GlcNAc...) asparagine" evidence="4">
    <location>
        <position position="763"/>
    </location>
</feature>
<feature type="glycosylation site" description="N-linked (GlcNAc...) asparagine" evidence="4">
    <location>
        <position position="808"/>
    </location>
</feature>
<feature type="glycosylation site" description="N-linked (GlcNAc...) asparagine" evidence="4">
    <location>
        <position position="825"/>
    </location>
</feature>
<feature type="glycosylation site" description="N-linked (GlcNAc...) asparagine" evidence="4">
    <location>
        <position position="939"/>
    </location>
</feature>
<feature type="glycosylation site" description="N-linked (GlcNAc...) asparagine" evidence="4">
    <location>
        <position position="999"/>
    </location>
</feature>
<feature type="glycosylation site" description="N-linked (GlcNAc...) asparagine" evidence="4">
    <location>
        <position position="1016"/>
    </location>
</feature>
<feature type="glycosylation site" description="N-linked (GlcNAc...) asparagine" evidence="4">
    <location>
        <position position="1169"/>
    </location>
</feature>
<feature type="glycosylation site" description="N-linked (GlcNAc...) asparagine" evidence="4">
    <location>
        <position position="1280"/>
    </location>
</feature>
<feature type="glycosylation site" description="N-linked (GlcNAc...) asparagine" evidence="4">
    <location>
        <position position="1313"/>
    </location>
</feature>
<feature type="glycosylation site" description="N-linked (GlcNAc...) asparagine" evidence="4">
    <location>
        <position position="1471"/>
    </location>
</feature>
<feature type="glycosylation site" description="N-linked (GlcNAc...) asparagine" evidence="4">
    <location>
        <position position="1532"/>
    </location>
</feature>
<feature type="glycosylation site" description="N-linked (GlcNAc...) asparagine" evidence="4">
    <location>
        <position position="1649"/>
    </location>
</feature>
<feature type="glycosylation site" description="N-linked (GlcNAc...) asparagine" evidence="4">
    <location>
        <position position="1665"/>
    </location>
</feature>
<feature type="glycosylation site" description="N-linked (GlcNAc...) asparagine" evidence="4">
    <location>
        <position position="1816"/>
    </location>
</feature>
<feature type="glycosylation site" description="N-linked (GlcNAc...) asparagine" evidence="4">
    <location>
        <position position="1855"/>
    </location>
</feature>
<feature type="glycosylation site" description="N-linked (GlcNAc...) asparagine" evidence="4">
    <location>
        <position position="1887"/>
    </location>
</feature>
<feature type="glycosylation site" description="N-linked (GlcNAc...) asparagine" evidence="4">
    <location>
        <position position="1900"/>
    </location>
</feature>
<feature type="glycosylation site" description="N-linked (GlcNAc...) asparagine" evidence="4">
    <location>
        <position position="2012"/>
    </location>
</feature>
<feature type="glycosylation site" description="N-linked (GlcNAc...) asparagine" evidence="4">
    <location>
        <position position="2048"/>
    </location>
</feature>
<feature type="glycosylation site" description="N-linked (GlcNAc...) asparagine" evidence="4">
    <location>
        <position position="2127"/>
    </location>
</feature>
<feature type="glycosylation site" description="N-linked (GlcNAc...) asparagine" evidence="4">
    <location>
        <position position="2166"/>
    </location>
</feature>
<feature type="glycosylation site" description="N-linked (GlcNAc...) asparagine" evidence="4">
    <location>
        <position position="2193"/>
    </location>
</feature>
<feature type="glycosylation site" description="N-linked (GlcNAc...) asparagine" evidence="4">
    <location>
        <position position="2261"/>
    </location>
</feature>
<feature type="glycosylation site" description="N-linked (GlcNAc...) asparagine" evidence="4">
    <location>
        <position position="2355"/>
    </location>
</feature>
<feature type="glycosylation site" description="N-linked (GlcNAc...) asparagine" evidence="4">
    <location>
        <position position="2367"/>
    </location>
</feature>
<feature type="glycosylation site" description="N-linked (GlcNAc...) asparagine" evidence="4">
    <location>
        <position position="2576"/>
    </location>
</feature>
<feature type="glycosylation site" description="N-linked (GlcNAc...) asparagine" evidence="4">
    <location>
        <position position="2614"/>
    </location>
</feature>
<feature type="glycosylation site" description="N-linked (GlcNAc...) asparagine" evidence="4">
    <location>
        <position position="2747"/>
    </location>
</feature>
<feature type="glycosylation site" description="N-linked (GlcNAc...) asparagine" evidence="4">
    <location>
        <position position="2806"/>
    </location>
</feature>
<feature type="glycosylation site" description="N-linked (GlcNAc...) asparagine" evidence="4">
    <location>
        <position position="2875"/>
    </location>
</feature>
<feature type="glycosylation site" description="N-linked (GlcNAc...) asparagine" evidence="4">
    <location>
        <position position="2894"/>
    </location>
</feature>
<feature type="glycosylation site" description="N-linked (GlcNAc...) asparagine" evidence="4">
    <location>
        <position position="2939"/>
    </location>
</feature>
<feature type="glycosylation site" description="N-linked (GlcNAc...) asparagine" evidence="4">
    <location>
        <position position="2979"/>
    </location>
</feature>
<evidence type="ECO:0000250" key="1">
    <source>
        <dbReference type="UniProtKB" id="P12830"/>
    </source>
</evidence>
<evidence type="ECO:0000250" key="2">
    <source>
        <dbReference type="UniProtKB" id="Q99PF4"/>
    </source>
</evidence>
<evidence type="ECO:0000250" key="3">
    <source>
        <dbReference type="UniProtKB" id="Q9H251"/>
    </source>
</evidence>
<evidence type="ECO:0000255" key="4"/>
<evidence type="ECO:0000255" key="5">
    <source>
        <dbReference type="PROSITE-ProRule" id="PRU00043"/>
    </source>
</evidence>
<sequence>MRHPPVTWCAMLWLLMLVSGSWGQVNRLPFFTNHFFDTYLLISEDTPVGSSVTQLLARDMDNDPLVFGVSGEEASRFFAVEPDTGVVWLRQPLDRETKSEFTVEFSVSDHQGVITRKVNIQVGDVNDNAPTFHNQPYSVRIPENTPVGTPIFIVNATDPDLGAGGSVLYSFQPPSQFFAIDSARGIVTVIRELDYEVTQAYQLTVNATDQDKTRPLSTLANLAIIITDVQDMDPIFINLPYSTNIYEHSPPGTTVRVITAVDQDKGRPRGIGYTIVSGNTNSIFALDYISGALTLNGLLDRENPLYSHGFILTVKGTELNDDRSPSDATVTTTFNILVIDINDNAPEFNSSEYSVAITELAQVGFALPLFIQVVDKDEGLNSMFEVYLVGNNSHHFIISPTSVQGKADIRIRVAIPLDYETVDRYDFDLFANESVPDHVGYAKVKITLINENDNRPIFSQPLYNVSLYENITVGTSVLTVLATDNDVGTFGEVNYFFSDDPDRFSLDKDTGLIMLIARLDYELIQRFTLTVIARDGGGEETTGRVRINVLDVNDNVPTFQKDAYVGALRENEPSVTQLVRLRATDEDSPPNNLITYSIVNASAFGSYFDISVYEGYGVISVSRPLDYEQIPNGLIYLTVMAKDAGNPPLYSTVPVTIEVFDENDNPPTFSKPAYFVSVVENIMAGATVLFLNATDLDRSREYGQESIIYSLEGSSQFRINARSGEITTTSLLDRETKAEYILIVRAVDGGVGHNQKTGIATVNVTLLDINDNHPTWKDAPYYINLVEMTPPDSDVTTVVAVDPDLGKNGTLVYSIQPPNKFYSLNSTTGKIRTTHVMLDRENPDPVEAELMRKIIVSVTDCGRPPLKATSSATVFVNLLDLNDNDPTFQNLPFVAEVLEGTPAGVSVYQVVAIDLDEGLNGLVSYRMQVGMPRMDFVINSTSGVVTTTAELDRERIAEYQLRVVASDAGTPTKSSTSTLTIRVLDVNDETPTFFPAVYNVSVSEDVPREFRVVWLNCTDNDVGLNAELSYFITAGNVDGKFSVGYRDAVVRTVVGLDRETTAAYTLVLEAIDNVPVGKRRTGTATVFVTVLDVNDNRPIFLQSSYEASVPEDIPEGHSIVQLKATDADEGEFGRVWYRILHGNHGNNFRLHVSSGLLVRGPRPLDRERNSSHVLMAEAYNHDLGPMRSSVRVIVYVEDVNDEAPVFTQQQYNRLGLRETAGIGTSVIVVRATDRDTGDGGLVNYRILSGAEGKFEIDESTGLIVTVDYLDYETKTSYLMNVSATDGAPPFNQGFCSVYVTLLNELDEAVQFSNASYEAVIMENLALGTEIVRVQAYSIDNLNQITYRFDAYTSAQAKALFKIDAITGVITVKGLVDREKGDFYTLTVVADDGGPKVDSTVKVYVTVLDENDNSPRFDFTSDSAISVPEDCPVGQRVATVKARDPDAGSNGQVVFSLASGNIAGAFEIITSNDSIGEVFVAKPLDREELDHYILKIVASDRGTPPRKKDHILQVTILDVNDNPPVIESPFGYNVSVNENVGGGTSVVQVRATDRDIGINSVLSYYITEGNEDMTFRMDRISGEIATRPAPPDRERQNFYHLVVTVEDEGTPTLSATTHVYVTIVDENDNAPVFQQPHYEVVLDEGPDTVNTSLITVQALDLDEGPNGTVTYAIVAGNIINTFRINRRTGVITAAKELDYEISHGRYTLIVTATDQCPILSHRLTSTTTVLVNVNDINDNVPTFPRDYEGPFDVTEGQPGPRVWTFLAHDRDSGPNGQVEYSVVDGDPLGEFVISPVEGVLRVRKDVELDRETIAFYNLTICARDRGVPPLSSTMLVGIRVLDINDNDPVLLNLPMNITISENSPVSSFVAHVLASDADSGCNALLTFNITAGNRERAFFINATTGIVTVNRPLDRERIPEYRLTVSVKDNPENPRIARKDFDLLLVSLADENDNHPLFTEGTYQAEVMENSPAGTPLTVLNGPILALDADEDVYAVVTYQLLGTHSDLFVIDNSTGVVTVRSGVIIDREAFSPPFLELLLLAEDVGQLNGTAYLFITILDDNDNWPTFSPPAYTVHLLENCPPGFSVLQITATDEDSGLNGELVYRIEAGAQDRFLIHPVTGVIRVGNATIDREEQESYRLTVVATDRGTVPLSGTATVTILIDDINDSRPEFLNPIQTVSVLESTEPGTVIANVTAIDLDLNPKLEYHILSIVAKDDTDRLVPDQEDAFAVNINTGSVIVKSPLNRELVATYEVTLSVIDNASDLPERSVSVPNAKLTVNILDVNDNTPQFKPFGITYYTERVLEGATPGTTLIAVAAVDPDKGLNGLITYTLLDLIPPGYVQLEDSSAGKVIANRTVDYEEVHWLNFTVRASDNGSPPRAAEIPVYLEIVDINDNNPIFDQLSYQEAVFEDVAVGTVILRVTATDADSGNFALIEYSLVDGEGKFAINPNTGDIYVLSSLDREKKDHYILTALAKDNPGDVASNRRENSVQVVIRVLDVNDCRPQFSKPQFSTSVYENEPAGTSVITMLATDQDEGSNGQLTYSLEGPGMEAFSVDMDSGLVTTQRPLQSYERFNLTVVATDGGEPPLWGTTMLLVEVIDVNDNRPVFVRPPNGTILHIKEEIPLRSNVYEVYATDKDEGLNGAVRYSFLKSTGNRDWEYFTIDPISGLIQTAQRLDREKQAVYSLILVASDLGQPVPYETMQPLQVALEDIDDNEPLFVRPPKGSPQYQLLTVPEHSPRGTLVGNVTGAVDADEGPNAIVYYFIAAGNEDKNFHLQPDGRLLVLRDLDRETEAIFSFIVKASSNRSWTPPRGPSPALDLLTDLTLQEVRVVLEDINDQPPRFTKAEYTAGVATDAKVGSELIQVLALDADIGNNSLVFYGILAIHYFRALANDSEDVGQVFTMGSVDGILRTFDLFMAYSPGYFVVDIVARDLAGHNDTAIIGIYILRDDQRVKIVINEIPDRVRGFEEEFIRLLSNITGAIVNTDDVQFHVDMKGRVNFAQTELLIHVVNRDTNRILDVDRVIQMIDENKEQLRNLFRNYNVLDVQPAISVQLPDDMSALQMAIIVLAILLFLAAMLFVLMNWYYRTIHKRKLKAIVAGSAGNRGFIDIMDMPNTNKYSFDGANPVWLDPFCRNLELAAQAEHEDDLPENLSEIADLWNSPTRTHGTFGREPAAVKPEDDRYLRAAIQEYDNIAKLGQIIREGPIKLIHTDLEEEPGDHSPGQGSLRFRHKPPTELKGPDGIHIVHGSTGTLLATDLNSLPEDDQKGLDRSLETLTASEATAFERNARTESAKSTPLHKLRDVIMESPLEITEL</sequence>
<dbReference type="EMBL" id="AB053447">
    <property type="protein sequence ID" value="BAB61904.1"/>
    <property type="molecule type" value="mRNA"/>
</dbReference>
<dbReference type="RefSeq" id="NP_446096.1">
    <property type="nucleotide sequence ID" value="NM_053644.1"/>
</dbReference>
<dbReference type="SMR" id="P58365"/>
<dbReference type="FunCoup" id="P58365">
    <property type="interactions" value="371"/>
</dbReference>
<dbReference type="STRING" id="10116.ENSRNOP00000048338"/>
<dbReference type="GlyCosmos" id="P58365">
    <property type="glycosylation" value="42 sites, No reported glycans"/>
</dbReference>
<dbReference type="GlyGen" id="P58365">
    <property type="glycosylation" value="42 sites"/>
</dbReference>
<dbReference type="iPTMnet" id="P58365"/>
<dbReference type="PhosphoSitePlus" id="P58365"/>
<dbReference type="PaxDb" id="10116-ENSRNOP00000048338"/>
<dbReference type="GeneID" id="114102"/>
<dbReference type="KEGG" id="rno:114102"/>
<dbReference type="UCSC" id="RGD:619760">
    <property type="organism name" value="rat"/>
</dbReference>
<dbReference type="AGR" id="RGD:619760"/>
<dbReference type="CTD" id="64072"/>
<dbReference type="RGD" id="619760">
    <property type="gene designation" value="Cdh23"/>
</dbReference>
<dbReference type="eggNOG" id="KOG3594">
    <property type="taxonomic scope" value="Eukaryota"/>
</dbReference>
<dbReference type="InParanoid" id="P58365"/>
<dbReference type="PhylomeDB" id="P58365"/>
<dbReference type="PRO" id="PR:P58365"/>
<dbReference type="Proteomes" id="UP000002494">
    <property type="component" value="Unplaced"/>
</dbReference>
<dbReference type="GO" id="GO:0045177">
    <property type="term" value="C:apical part of cell"/>
    <property type="evidence" value="ECO:0000314"/>
    <property type="project" value="RGD"/>
</dbReference>
<dbReference type="GO" id="GO:0005911">
    <property type="term" value="C:cell-cell junction"/>
    <property type="evidence" value="ECO:0000318"/>
    <property type="project" value="GO_Central"/>
</dbReference>
<dbReference type="GO" id="GO:0005813">
    <property type="term" value="C:centrosome"/>
    <property type="evidence" value="ECO:0000266"/>
    <property type="project" value="RGD"/>
</dbReference>
<dbReference type="GO" id="GO:0098683">
    <property type="term" value="C:cochlear hair cell ribbon synapse"/>
    <property type="evidence" value="ECO:0000266"/>
    <property type="project" value="RGD"/>
</dbReference>
<dbReference type="GO" id="GO:0060091">
    <property type="term" value="C:kinocilium"/>
    <property type="evidence" value="ECO:0000266"/>
    <property type="project" value="RGD"/>
</dbReference>
<dbReference type="GO" id="GO:0001917">
    <property type="term" value="C:photoreceptor inner segment"/>
    <property type="evidence" value="ECO:0000266"/>
    <property type="project" value="RGD"/>
</dbReference>
<dbReference type="GO" id="GO:0098684">
    <property type="term" value="C:photoreceptor ribbon synapse"/>
    <property type="evidence" value="ECO:0000266"/>
    <property type="project" value="RGD"/>
</dbReference>
<dbReference type="GO" id="GO:0005886">
    <property type="term" value="C:plasma membrane"/>
    <property type="evidence" value="ECO:0007669"/>
    <property type="project" value="UniProtKB-SubCell"/>
</dbReference>
<dbReference type="GO" id="GO:0032420">
    <property type="term" value="C:stereocilium"/>
    <property type="evidence" value="ECO:0000266"/>
    <property type="project" value="RGD"/>
</dbReference>
<dbReference type="GO" id="GO:0032426">
    <property type="term" value="C:stereocilium tip"/>
    <property type="evidence" value="ECO:0000266"/>
    <property type="project" value="RGD"/>
</dbReference>
<dbReference type="GO" id="GO:0045202">
    <property type="term" value="C:synapse"/>
    <property type="evidence" value="ECO:0000266"/>
    <property type="project" value="RGD"/>
</dbReference>
<dbReference type="GO" id="GO:0005509">
    <property type="term" value="F:calcium ion binding"/>
    <property type="evidence" value="ECO:0000318"/>
    <property type="project" value="GO_Central"/>
</dbReference>
<dbReference type="GO" id="GO:0008344">
    <property type="term" value="P:adult locomotory behavior"/>
    <property type="evidence" value="ECO:0000266"/>
    <property type="project" value="RGD"/>
</dbReference>
<dbReference type="GO" id="GO:0060088">
    <property type="term" value="P:auditory receptor cell stereocilium organization"/>
    <property type="evidence" value="ECO:0000266"/>
    <property type="project" value="RGD"/>
</dbReference>
<dbReference type="GO" id="GO:0006816">
    <property type="term" value="P:calcium ion transport"/>
    <property type="evidence" value="ECO:0000266"/>
    <property type="project" value="RGD"/>
</dbReference>
<dbReference type="GO" id="GO:0098609">
    <property type="term" value="P:cell-cell adhesion"/>
    <property type="evidence" value="ECO:0000318"/>
    <property type="project" value="GO_Central"/>
</dbReference>
<dbReference type="GO" id="GO:0090102">
    <property type="term" value="P:cochlea development"/>
    <property type="evidence" value="ECO:0000266"/>
    <property type="project" value="RGD"/>
</dbReference>
<dbReference type="GO" id="GO:0050957">
    <property type="term" value="P:equilibrioception"/>
    <property type="evidence" value="ECO:0000266"/>
    <property type="project" value="RGD"/>
</dbReference>
<dbReference type="GO" id="GO:0007156">
    <property type="term" value="P:homophilic cell adhesion via plasma membrane adhesion molecules"/>
    <property type="evidence" value="ECO:0007669"/>
    <property type="project" value="InterPro"/>
</dbReference>
<dbReference type="GO" id="GO:0042491">
    <property type="term" value="P:inner ear auditory receptor cell differentiation"/>
    <property type="evidence" value="ECO:0000266"/>
    <property type="project" value="RGD"/>
</dbReference>
<dbReference type="GO" id="GO:0048839">
    <property type="term" value="P:inner ear development"/>
    <property type="evidence" value="ECO:0000266"/>
    <property type="project" value="RGD"/>
</dbReference>
<dbReference type="GO" id="GO:0042472">
    <property type="term" value="P:inner ear morphogenesis"/>
    <property type="evidence" value="ECO:0000266"/>
    <property type="project" value="RGD"/>
</dbReference>
<dbReference type="GO" id="GO:0060122">
    <property type="term" value="P:inner ear receptor cell stereocilium organization"/>
    <property type="evidence" value="ECO:0000266"/>
    <property type="project" value="RGD"/>
</dbReference>
<dbReference type="GO" id="GO:0007626">
    <property type="term" value="P:locomotory behavior"/>
    <property type="evidence" value="ECO:0000266"/>
    <property type="project" value="RGD"/>
</dbReference>
<dbReference type="GO" id="GO:0045494">
    <property type="term" value="P:photoreceptor cell maintenance"/>
    <property type="evidence" value="ECO:0000266"/>
    <property type="project" value="RGD"/>
</dbReference>
<dbReference type="GO" id="GO:0051480">
    <property type="term" value="P:regulation of cytosolic calcium ion concentration"/>
    <property type="evidence" value="ECO:0000266"/>
    <property type="project" value="RGD"/>
</dbReference>
<dbReference type="GO" id="GO:0060013">
    <property type="term" value="P:righting reflex"/>
    <property type="evidence" value="ECO:0000266"/>
    <property type="project" value="RGD"/>
</dbReference>
<dbReference type="GO" id="GO:0050953">
    <property type="term" value="P:sensory perception of light stimulus"/>
    <property type="evidence" value="ECO:0000266"/>
    <property type="project" value="RGD"/>
</dbReference>
<dbReference type="GO" id="GO:0007605">
    <property type="term" value="P:sensory perception of sound"/>
    <property type="evidence" value="ECO:0000266"/>
    <property type="project" value="RGD"/>
</dbReference>
<dbReference type="CDD" id="cd11304">
    <property type="entry name" value="Cadherin_repeat"/>
    <property type="match status" value="27"/>
</dbReference>
<dbReference type="FunFam" id="2.60.40.60:FF:000141">
    <property type="entry name" value="Cadherin 23"/>
    <property type="match status" value="1"/>
</dbReference>
<dbReference type="FunFam" id="2.60.40.60:FF:000142">
    <property type="entry name" value="Cadherin 23"/>
    <property type="match status" value="1"/>
</dbReference>
<dbReference type="FunFam" id="2.60.40.60:FF:000147">
    <property type="entry name" value="Cadherin 23"/>
    <property type="match status" value="1"/>
</dbReference>
<dbReference type="FunFam" id="2.60.40.60:FF:000173">
    <property type="entry name" value="Cadherin 23"/>
    <property type="match status" value="2"/>
</dbReference>
<dbReference type="FunFam" id="2.60.40.60:FF:000203">
    <property type="entry name" value="Cadherin 23"/>
    <property type="match status" value="1"/>
</dbReference>
<dbReference type="FunFam" id="2.60.40.60:FF:000228">
    <property type="entry name" value="Cadherin 23"/>
    <property type="match status" value="1"/>
</dbReference>
<dbReference type="FunFam" id="2.60.40.60:FF:000393">
    <property type="entry name" value="Cadherin-23"/>
    <property type="match status" value="1"/>
</dbReference>
<dbReference type="FunFam" id="2.60.40.60:FF:000098">
    <property type="entry name" value="cadherin-23 isoform X1"/>
    <property type="match status" value="1"/>
</dbReference>
<dbReference type="FunFam" id="2.60.40.60:FF:000104">
    <property type="entry name" value="cadherin-23 isoform X1"/>
    <property type="match status" value="1"/>
</dbReference>
<dbReference type="FunFam" id="2.60.40.60:FF:000130">
    <property type="entry name" value="cadherin-23 isoform X1"/>
    <property type="match status" value="1"/>
</dbReference>
<dbReference type="FunFam" id="2.60.40.60:FF:000135">
    <property type="entry name" value="cadherin-23 isoform X1"/>
    <property type="match status" value="1"/>
</dbReference>
<dbReference type="FunFam" id="2.60.40.60:FF:000146">
    <property type="entry name" value="cadherin-23 isoform X1"/>
    <property type="match status" value="1"/>
</dbReference>
<dbReference type="FunFam" id="2.60.40.60:FF:000155">
    <property type="entry name" value="cadherin-23 isoform X1"/>
    <property type="match status" value="1"/>
</dbReference>
<dbReference type="FunFam" id="2.60.40.60:FF:000156">
    <property type="entry name" value="cadherin-23 isoform X1"/>
    <property type="match status" value="1"/>
</dbReference>
<dbReference type="FunFam" id="2.60.40.60:FF:000160">
    <property type="entry name" value="cadherin-23 isoform X1"/>
    <property type="match status" value="1"/>
</dbReference>
<dbReference type="FunFam" id="2.60.40.60:FF:000164">
    <property type="entry name" value="cadherin-23 isoform X1"/>
    <property type="match status" value="1"/>
</dbReference>
<dbReference type="FunFam" id="2.60.40.60:FF:000166">
    <property type="entry name" value="cadherin-23 isoform X1"/>
    <property type="match status" value="1"/>
</dbReference>
<dbReference type="FunFam" id="2.60.40.60:FF:000172">
    <property type="entry name" value="cadherin-23 isoform X1"/>
    <property type="match status" value="1"/>
</dbReference>
<dbReference type="FunFam" id="2.60.40.60:FF:000175">
    <property type="entry name" value="cadherin-23 isoform X1"/>
    <property type="match status" value="1"/>
</dbReference>
<dbReference type="FunFam" id="2.60.40.60:FF:000206">
    <property type="entry name" value="cadherin-23 isoform X1"/>
    <property type="match status" value="1"/>
</dbReference>
<dbReference type="FunFam" id="2.60.40.60:FF:000020">
    <property type="entry name" value="Dachsous cadherin-related 1b"/>
    <property type="match status" value="1"/>
</dbReference>
<dbReference type="FunFam" id="2.60.40.60:FF:000100">
    <property type="entry name" value="protocadherin Fat 2"/>
    <property type="match status" value="1"/>
</dbReference>
<dbReference type="FunFam" id="2.60.40.60:FF:000060">
    <property type="entry name" value="Putative cadherin-23"/>
    <property type="match status" value="3"/>
</dbReference>
<dbReference type="FunFam" id="2.60.40.60:FF:000807">
    <property type="entry name" value="Uncharacterized protein"/>
    <property type="match status" value="1"/>
</dbReference>
<dbReference type="Gene3D" id="2.60.40.60">
    <property type="entry name" value="Cadherins"/>
    <property type="match status" value="27"/>
</dbReference>
<dbReference type="InterPro" id="IPR002126">
    <property type="entry name" value="Cadherin-like_dom"/>
</dbReference>
<dbReference type="InterPro" id="IPR015919">
    <property type="entry name" value="Cadherin-like_sf"/>
</dbReference>
<dbReference type="InterPro" id="IPR020894">
    <property type="entry name" value="Cadherin_CS"/>
</dbReference>
<dbReference type="PANTHER" id="PTHR24026:SF130">
    <property type="entry name" value="CADHERIN RELATED 23"/>
    <property type="match status" value="1"/>
</dbReference>
<dbReference type="PANTHER" id="PTHR24026">
    <property type="entry name" value="FAT ATYPICAL CADHERIN-RELATED"/>
    <property type="match status" value="1"/>
</dbReference>
<dbReference type="Pfam" id="PF00028">
    <property type="entry name" value="Cadherin"/>
    <property type="match status" value="24"/>
</dbReference>
<dbReference type="PRINTS" id="PR00205">
    <property type="entry name" value="CADHERIN"/>
</dbReference>
<dbReference type="SMART" id="SM00112">
    <property type="entry name" value="CA"/>
    <property type="match status" value="26"/>
</dbReference>
<dbReference type="SUPFAM" id="SSF49313">
    <property type="entry name" value="Cadherin-like"/>
    <property type="match status" value="27"/>
</dbReference>
<dbReference type="PROSITE" id="PS00232">
    <property type="entry name" value="CADHERIN_1"/>
    <property type="match status" value="17"/>
</dbReference>
<dbReference type="PROSITE" id="PS50268">
    <property type="entry name" value="CADHERIN_2"/>
    <property type="match status" value="27"/>
</dbReference>
<comment type="function">
    <text evidence="3">Cadherins are calcium-dependent cell adhesion proteins. They preferentially interact with themselves in a homophilic manner in connecting cells. CDH23 is required for establishing and/or maintaining the proper organization of the stereocilia bundle of hair cells in the cochlea and the vestibule during late embryonic/early postnatal development. It is part of the functional network formed by USH1C, USH1G, CDH23 and MYO7A that mediates mechanotransduction in cochlear hair cells. Required for normal hearing.</text>
</comment>
<comment type="subunit">
    <text evidence="2 3">antiparallel heterodimer with PCDH15 (By similarity). Interacts with USH1C and USH1G (By similarity).</text>
</comment>
<comment type="subcellular location">
    <subcellularLocation>
        <location evidence="3">Cell membrane</location>
        <topology evidence="4">Single-pass type I membrane protein</topology>
    </subcellularLocation>
</comment>
<comment type="domain">
    <text evidence="1">Three calcium ions are usually bound at the interface of each cadherin domain and rigidify the connections, imparting a strong curvature to the full-length ectodomain.</text>
</comment>
<comment type="domain">
    <text evidence="2">Cadherin repeats 1 and 2 mediate calcium-dependent heterophilic interaction with PCDH15.</text>
</comment>
<keyword id="KW-0106">Calcium</keyword>
<keyword id="KW-0130">Cell adhesion</keyword>
<keyword id="KW-1003">Cell membrane</keyword>
<keyword id="KW-0325">Glycoprotein</keyword>
<keyword id="KW-1009">Hearing</keyword>
<keyword id="KW-0472">Membrane</keyword>
<keyword id="KW-0479">Metal-binding</keyword>
<keyword id="KW-1185">Reference proteome</keyword>
<keyword id="KW-0677">Repeat</keyword>
<keyword id="KW-0732">Signal</keyword>
<keyword id="KW-0812">Transmembrane</keyword>
<keyword id="KW-1133">Transmembrane helix</keyword>
<reference key="1">
    <citation type="journal article" date="2001" name="Brain Res. Mol. Brain Res.">
        <title>Identification of three novel non-classical cadherin genes through comprehensive analysis of large cDNAs.</title>
        <authorList>
            <person name="Nakajima D."/>
            <person name="Nakayama M."/>
            <person name="Kikuno R."/>
            <person name="Hirosawa M."/>
            <person name="Nagase T."/>
            <person name="Ohara O."/>
        </authorList>
    </citation>
    <scope>NUCLEOTIDE SEQUENCE [MRNA]</scope>
    <source>
        <strain>Sprague-Dawley</strain>
        <tissue>Testis</tissue>
    </source>
</reference>
<organism>
    <name type="scientific">Rattus norvegicus</name>
    <name type="common">Rat</name>
    <dbReference type="NCBI Taxonomy" id="10116"/>
    <lineage>
        <taxon>Eukaryota</taxon>
        <taxon>Metazoa</taxon>
        <taxon>Chordata</taxon>
        <taxon>Craniata</taxon>
        <taxon>Vertebrata</taxon>
        <taxon>Euteleostomi</taxon>
        <taxon>Mammalia</taxon>
        <taxon>Eutheria</taxon>
        <taxon>Euarchontoglires</taxon>
        <taxon>Glires</taxon>
        <taxon>Rodentia</taxon>
        <taxon>Myomorpha</taxon>
        <taxon>Muroidea</taxon>
        <taxon>Muridae</taxon>
        <taxon>Murinae</taxon>
        <taxon>Rattus</taxon>
    </lineage>
</organism>